<proteinExistence type="inferred from homology"/>
<accession>A1JRD6</accession>
<gene>
    <name evidence="1" type="primary">pyrI</name>
    <name type="ordered locus">YE3767</name>
</gene>
<comment type="function">
    <text evidence="1">Involved in allosteric regulation of aspartate carbamoyltransferase.</text>
</comment>
<comment type="cofactor">
    <cofactor evidence="1">
        <name>Zn(2+)</name>
        <dbReference type="ChEBI" id="CHEBI:29105"/>
    </cofactor>
    <text evidence="1">Binds 1 zinc ion per subunit.</text>
</comment>
<comment type="subunit">
    <text evidence="1">Contains catalytic and regulatory chains.</text>
</comment>
<comment type="similarity">
    <text evidence="1">Belongs to the PyrI family.</text>
</comment>
<organism>
    <name type="scientific">Yersinia enterocolitica serotype O:8 / biotype 1B (strain NCTC 13174 / 8081)</name>
    <dbReference type="NCBI Taxonomy" id="393305"/>
    <lineage>
        <taxon>Bacteria</taxon>
        <taxon>Pseudomonadati</taxon>
        <taxon>Pseudomonadota</taxon>
        <taxon>Gammaproteobacteria</taxon>
        <taxon>Enterobacterales</taxon>
        <taxon>Yersiniaceae</taxon>
        <taxon>Yersinia</taxon>
    </lineage>
</organism>
<reference key="1">
    <citation type="journal article" date="2006" name="PLoS Genet.">
        <title>The complete genome sequence and comparative genome analysis of the high pathogenicity Yersinia enterocolitica strain 8081.</title>
        <authorList>
            <person name="Thomson N.R."/>
            <person name="Howard S."/>
            <person name="Wren B.W."/>
            <person name="Holden M.T.G."/>
            <person name="Crossman L."/>
            <person name="Challis G.L."/>
            <person name="Churcher C."/>
            <person name="Mungall K."/>
            <person name="Brooks K."/>
            <person name="Chillingworth T."/>
            <person name="Feltwell T."/>
            <person name="Abdellah Z."/>
            <person name="Hauser H."/>
            <person name="Jagels K."/>
            <person name="Maddison M."/>
            <person name="Moule S."/>
            <person name="Sanders M."/>
            <person name="Whitehead S."/>
            <person name="Quail M.A."/>
            <person name="Dougan G."/>
            <person name="Parkhill J."/>
            <person name="Prentice M.B."/>
        </authorList>
    </citation>
    <scope>NUCLEOTIDE SEQUENCE [LARGE SCALE GENOMIC DNA]</scope>
    <source>
        <strain>NCTC 13174 / 8081</strain>
    </source>
</reference>
<sequence>MTQDYKLQVEAIKCGTVIDHIPAQIGFKLLSLFKLTATDQRITIGLNLPSKRSGRKDLIKIENTFLTEQQANQLAMYAPDATVNRIDNYEVVKKLTLSLPEHIDGVLTCPNSNCISHNEPVDSSFKVKAKQGEIHLKCKYCEKEFDHQVVLQAD</sequence>
<name>PYRI_YERE8</name>
<keyword id="KW-0479">Metal-binding</keyword>
<keyword id="KW-0665">Pyrimidine biosynthesis</keyword>
<keyword id="KW-0862">Zinc</keyword>
<feature type="chain" id="PRO_1000000056" description="Aspartate carbamoyltransferase regulatory chain">
    <location>
        <begin position="1"/>
        <end position="154"/>
    </location>
</feature>
<feature type="binding site" evidence="1">
    <location>
        <position position="109"/>
    </location>
    <ligand>
        <name>Zn(2+)</name>
        <dbReference type="ChEBI" id="CHEBI:29105"/>
    </ligand>
</feature>
<feature type="binding site" evidence="1">
    <location>
        <position position="114"/>
    </location>
    <ligand>
        <name>Zn(2+)</name>
        <dbReference type="ChEBI" id="CHEBI:29105"/>
    </ligand>
</feature>
<feature type="binding site" evidence="1">
    <location>
        <position position="138"/>
    </location>
    <ligand>
        <name>Zn(2+)</name>
        <dbReference type="ChEBI" id="CHEBI:29105"/>
    </ligand>
</feature>
<feature type="binding site" evidence="1">
    <location>
        <position position="141"/>
    </location>
    <ligand>
        <name>Zn(2+)</name>
        <dbReference type="ChEBI" id="CHEBI:29105"/>
    </ligand>
</feature>
<protein>
    <recommendedName>
        <fullName evidence="1">Aspartate carbamoyltransferase regulatory chain</fullName>
    </recommendedName>
</protein>
<evidence type="ECO:0000255" key="1">
    <source>
        <dbReference type="HAMAP-Rule" id="MF_00002"/>
    </source>
</evidence>
<dbReference type="EMBL" id="AM286415">
    <property type="protein sequence ID" value="CAL13791.1"/>
    <property type="molecule type" value="Genomic_DNA"/>
</dbReference>
<dbReference type="RefSeq" id="WP_004392342.1">
    <property type="nucleotide sequence ID" value="NC_008800.1"/>
</dbReference>
<dbReference type="RefSeq" id="YP_001007919.1">
    <property type="nucleotide sequence ID" value="NC_008800.1"/>
</dbReference>
<dbReference type="SMR" id="A1JRD6"/>
<dbReference type="GeneID" id="82552620"/>
<dbReference type="KEGG" id="yen:YE3767"/>
<dbReference type="PATRIC" id="fig|393305.7.peg.4012"/>
<dbReference type="eggNOG" id="COG1781">
    <property type="taxonomic scope" value="Bacteria"/>
</dbReference>
<dbReference type="HOGENOM" id="CLU_128576_0_0_6"/>
<dbReference type="OrthoDB" id="5599321at2"/>
<dbReference type="Proteomes" id="UP000000642">
    <property type="component" value="Chromosome"/>
</dbReference>
<dbReference type="GO" id="GO:0009347">
    <property type="term" value="C:aspartate carbamoyltransferase complex"/>
    <property type="evidence" value="ECO:0007669"/>
    <property type="project" value="InterPro"/>
</dbReference>
<dbReference type="GO" id="GO:0046872">
    <property type="term" value="F:metal ion binding"/>
    <property type="evidence" value="ECO:0007669"/>
    <property type="project" value="UniProtKB-KW"/>
</dbReference>
<dbReference type="GO" id="GO:0006207">
    <property type="term" value="P:'de novo' pyrimidine nucleobase biosynthetic process"/>
    <property type="evidence" value="ECO:0007669"/>
    <property type="project" value="InterPro"/>
</dbReference>
<dbReference type="GO" id="GO:0006221">
    <property type="term" value="P:pyrimidine nucleotide biosynthetic process"/>
    <property type="evidence" value="ECO:0007669"/>
    <property type="project" value="UniProtKB-UniRule"/>
</dbReference>
<dbReference type="FunFam" id="3.30.70.140:FF:000001">
    <property type="entry name" value="Aspartate carbamoyltransferase regulatory chain"/>
    <property type="match status" value="1"/>
</dbReference>
<dbReference type="Gene3D" id="2.30.30.20">
    <property type="entry name" value="Aspartate carbamoyltransferase regulatory subunit, C-terminal domain"/>
    <property type="match status" value="1"/>
</dbReference>
<dbReference type="Gene3D" id="3.30.70.140">
    <property type="entry name" value="Aspartate carbamoyltransferase regulatory subunit, N-terminal domain"/>
    <property type="match status" value="1"/>
</dbReference>
<dbReference type="HAMAP" id="MF_00002">
    <property type="entry name" value="Asp_carb_tr_reg"/>
    <property type="match status" value="1"/>
</dbReference>
<dbReference type="InterPro" id="IPR020545">
    <property type="entry name" value="Asp_carbamoyltransf_reg_N"/>
</dbReference>
<dbReference type="InterPro" id="IPR002801">
    <property type="entry name" value="Asp_carbamoylTrfase_reg"/>
</dbReference>
<dbReference type="InterPro" id="IPR020542">
    <property type="entry name" value="Asp_carbamoyltrfase_reg_C"/>
</dbReference>
<dbReference type="InterPro" id="IPR036792">
    <property type="entry name" value="Asp_carbatrfase_reg_C_sf"/>
</dbReference>
<dbReference type="InterPro" id="IPR036793">
    <property type="entry name" value="Asp_carbatrfase_reg_N_sf"/>
</dbReference>
<dbReference type="NCBIfam" id="TIGR00240">
    <property type="entry name" value="ATCase_reg"/>
    <property type="match status" value="1"/>
</dbReference>
<dbReference type="PANTHER" id="PTHR35805">
    <property type="entry name" value="ASPARTATE CARBAMOYLTRANSFERASE REGULATORY CHAIN"/>
    <property type="match status" value="1"/>
</dbReference>
<dbReference type="PANTHER" id="PTHR35805:SF1">
    <property type="entry name" value="ASPARTATE CARBAMOYLTRANSFERASE REGULATORY CHAIN"/>
    <property type="match status" value="1"/>
</dbReference>
<dbReference type="Pfam" id="PF01948">
    <property type="entry name" value="PyrI"/>
    <property type="match status" value="1"/>
</dbReference>
<dbReference type="Pfam" id="PF02748">
    <property type="entry name" value="PyrI_C"/>
    <property type="match status" value="1"/>
</dbReference>
<dbReference type="SUPFAM" id="SSF57825">
    <property type="entry name" value="Aspartate carbamoyltransferase, Regulatory-chain, C-terminal domain"/>
    <property type="match status" value="1"/>
</dbReference>
<dbReference type="SUPFAM" id="SSF54893">
    <property type="entry name" value="Aspartate carbamoyltransferase, Regulatory-chain, N-terminal domain"/>
    <property type="match status" value="1"/>
</dbReference>